<comment type="function">
    <text evidence="2 4 5 6 7">Catalyzes the first and rate-limiting reaction of the four reactions that constitute the long-chain fatty acids elongation cycle. This endoplasmic reticulum-bound enzymatic process allows the addition of 2 carbons to the chain of long- and very long-chain fatty acids (VLCFAs) per cycle. Condensing enzyme that exhibits activity toward saturated and unsaturated acyl-CoA substrates with higher activity toward C18 acyl-CoAs, especially C18:0 acyl-CoAs. May participate in the production of saturated and monounsaturated VLCFAs of different chain lengths that are involved in multiple biological processes as precursors of membrane lipids and lipid mediators. Participates in the formation of certain VLCFA and triglycerides in certain cells of the hair follicles and the sebaceous glands, required for skin barrier function. Critical enzyme for lipid accumulation and metabolic activity in brown adipocytes during the early phase of the tissue recruitment. Plays a role in lipid storage and in resistance to diet-induced obesity.</text>
</comment>
<comment type="catalytic activity">
    <reaction evidence="2">
        <text>a very-long-chain acyl-CoA + malonyl-CoA + H(+) = a very-long-chain 3-oxoacyl-CoA + CO2 + CoA</text>
        <dbReference type="Rhea" id="RHEA:32727"/>
        <dbReference type="ChEBI" id="CHEBI:15378"/>
        <dbReference type="ChEBI" id="CHEBI:16526"/>
        <dbReference type="ChEBI" id="CHEBI:57287"/>
        <dbReference type="ChEBI" id="CHEBI:57384"/>
        <dbReference type="ChEBI" id="CHEBI:90725"/>
        <dbReference type="ChEBI" id="CHEBI:90736"/>
        <dbReference type="EC" id="2.3.1.199"/>
    </reaction>
    <physiologicalReaction direction="left-to-right" evidence="1">
        <dbReference type="Rhea" id="RHEA:32728"/>
    </physiologicalReaction>
</comment>
<comment type="catalytic activity">
    <reaction evidence="1">
        <text>eicosanoyl-CoA + malonyl-CoA + H(+) = 3-oxodocosanoyl-CoA + CO2 + CoA</text>
        <dbReference type="Rhea" id="RHEA:35327"/>
        <dbReference type="ChEBI" id="CHEBI:15378"/>
        <dbReference type="ChEBI" id="CHEBI:16526"/>
        <dbReference type="ChEBI" id="CHEBI:57287"/>
        <dbReference type="ChEBI" id="CHEBI:57380"/>
        <dbReference type="ChEBI" id="CHEBI:57384"/>
        <dbReference type="ChEBI" id="CHEBI:71451"/>
    </reaction>
    <physiologicalReaction direction="left-to-right" evidence="1">
        <dbReference type="Rhea" id="RHEA:35328"/>
    </physiologicalReaction>
</comment>
<comment type="catalytic activity">
    <reaction evidence="1">
        <text>hexadecanoyl-CoA + malonyl-CoA + H(+) = 3-oxooctadecanoyl-CoA + CO2 + CoA</text>
        <dbReference type="Rhea" id="RHEA:35315"/>
        <dbReference type="ChEBI" id="CHEBI:15378"/>
        <dbReference type="ChEBI" id="CHEBI:16526"/>
        <dbReference type="ChEBI" id="CHEBI:57287"/>
        <dbReference type="ChEBI" id="CHEBI:57379"/>
        <dbReference type="ChEBI" id="CHEBI:57384"/>
        <dbReference type="ChEBI" id="CHEBI:71407"/>
    </reaction>
    <physiologicalReaction direction="left-to-right" evidence="1">
        <dbReference type="Rhea" id="RHEA:35316"/>
    </physiologicalReaction>
</comment>
<comment type="catalytic activity">
    <reaction evidence="1">
        <text>octadecanoyl-CoA + malonyl-CoA + H(+) = 3-oxoeicosanoyl-CoA + CO2 + CoA</text>
        <dbReference type="Rhea" id="RHEA:35319"/>
        <dbReference type="ChEBI" id="CHEBI:15378"/>
        <dbReference type="ChEBI" id="CHEBI:16526"/>
        <dbReference type="ChEBI" id="CHEBI:57287"/>
        <dbReference type="ChEBI" id="CHEBI:57384"/>
        <dbReference type="ChEBI" id="CHEBI:57394"/>
        <dbReference type="ChEBI" id="CHEBI:65115"/>
    </reaction>
    <physiologicalReaction direction="left-to-right" evidence="1">
        <dbReference type="Rhea" id="RHEA:35320"/>
    </physiologicalReaction>
</comment>
<comment type="catalytic activity">
    <reaction evidence="1">
        <text>(9Z)-octadecenoyl-CoA + malonyl-CoA + H(+) = 3-oxo-(11Z)-eicosenoyl-CoA + CO2 + CoA</text>
        <dbReference type="Rhea" id="RHEA:36511"/>
        <dbReference type="ChEBI" id="CHEBI:15378"/>
        <dbReference type="ChEBI" id="CHEBI:16526"/>
        <dbReference type="ChEBI" id="CHEBI:57287"/>
        <dbReference type="ChEBI" id="CHEBI:57384"/>
        <dbReference type="ChEBI" id="CHEBI:57387"/>
        <dbReference type="ChEBI" id="CHEBI:74011"/>
    </reaction>
    <physiologicalReaction direction="left-to-right" evidence="1">
        <dbReference type="Rhea" id="RHEA:36512"/>
    </physiologicalReaction>
</comment>
<comment type="catalytic activity">
    <reaction evidence="1">
        <text>(9Z,12Z)-octadecadienoyl-CoA + malonyl-CoA + H(+) = (11Z,14Z)-3-oxoicosa-11,14-dienoyl-CoA + CO2 + CoA</text>
        <dbReference type="Rhea" id="RHEA:36503"/>
        <dbReference type="ChEBI" id="CHEBI:15378"/>
        <dbReference type="ChEBI" id="CHEBI:16526"/>
        <dbReference type="ChEBI" id="CHEBI:57287"/>
        <dbReference type="ChEBI" id="CHEBI:57383"/>
        <dbReference type="ChEBI" id="CHEBI:57384"/>
        <dbReference type="ChEBI" id="CHEBI:74012"/>
    </reaction>
    <physiologicalReaction direction="left-to-right" evidence="1">
        <dbReference type="Rhea" id="RHEA:36504"/>
    </physiologicalReaction>
</comment>
<comment type="catalytic activity">
    <reaction evidence="1">
        <text>(9Z,12Z,15Z)-octadecatrienoyl-CoA + malonyl-CoA + H(+) = (11Z,14Z,17Z)-3-oxoeicosatrienoyl-CoA + CO2 + CoA</text>
        <dbReference type="Rhea" id="RHEA:36523"/>
        <dbReference type="ChEBI" id="CHEBI:15378"/>
        <dbReference type="ChEBI" id="CHEBI:16526"/>
        <dbReference type="ChEBI" id="CHEBI:57287"/>
        <dbReference type="ChEBI" id="CHEBI:57384"/>
        <dbReference type="ChEBI" id="CHEBI:74034"/>
        <dbReference type="ChEBI" id="CHEBI:74054"/>
    </reaction>
    <physiologicalReaction direction="left-to-right" evidence="1">
        <dbReference type="Rhea" id="RHEA:36524"/>
    </physiologicalReaction>
</comment>
<comment type="catalytic activity">
    <reaction evidence="1">
        <text>docosanoyl-CoA + malonyl-CoA + H(+) = 3-oxotetracosanoyl-CoA + CO2 + CoA</text>
        <dbReference type="Rhea" id="RHEA:36507"/>
        <dbReference type="ChEBI" id="CHEBI:15378"/>
        <dbReference type="ChEBI" id="CHEBI:16526"/>
        <dbReference type="ChEBI" id="CHEBI:57287"/>
        <dbReference type="ChEBI" id="CHEBI:57384"/>
        <dbReference type="ChEBI" id="CHEBI:65059"/>
        <dbReference type="ChEBI" id="CHEBI:73977"/>
    </reaction>
    <physiologicalReaction direction="left-to-right" evidence="1">
        <dbReference type="Rhea" id="RHEA:36508"/>
    </physiologicalReaction>
</comment>
<comment type="catalytic activity">
    <reaction evidence="1">
        <text>tetradecanoyl-CoA + malonyl-CoA + H(+) = 3-oxohexadecanoyl-CoA + CO2 + CoA</text>
        <dbReference type="Rhea" id="RHEA:39167"/>
        <dbReference type="ChEBI" id="CHEBI:15378"/>
        <dbReference type="ChEBI" id="CHEBI:16526"/>
        <dbReference type="ChEBI" id="CHEBI:57287"/>
        <dbReference type="ChEBI" id="CHEBI:57349"/>
        <dbReference type="ChEBI" id="CHEBI:57384"/>
        <dbReference type="ChEBI" id="CHEBI:57385"/>
    </reaction>
    <physiologicalReaction direction="left-to-right" evidence="1">
        <dbReference type="Rhea" id="RHEA:39168"/>
    </physiologicalReaction>
</comment>
<comment type="pathway">
    <text evidence="2">Lipid metabolism; polyunsaturated fatty acid biosynthesis.</text>
</comment>
<comment type="subunit">
    <text evidence="1">Interacts with TECR.</text>
</comment>
<comment type="subcellular location">
    <subcellularLocation>
        <location evidence="2 3">Endoplasmic reticulum membrane</location>
        <topology evidence="2">Multi-pass membrane protein</topology>
    </subcellularLocation>
</comment>
<comment type="tissue specificity">
    <text evidence="5 8">Expressed in brown adipose tissue and liver. In the skin, strong expressed in the cells of the inner layer of the outer root sheath of the hair follicles and in the sebocytes of the sebaceous glands. Hardly detectable in the epidermis and not at all in fibroblasts.</text>
</comment>
<comment type="induction">
    <text>Strongly up-regulated in brown adipose tissue in conditions of brown fat recruitment, such as cold stress, perinatal development and after diet-induced thermogenesis. A synergistic action of both catecholamines and glucocorticoids is required for the induction.</text>
</comment>
<comment type="PTM">
    <text evidence="2 3">N-Glycosylated.</text>
</comment>
<comment type="disruption phenotype">
    <text evidence="5 6 7">Mutant mice grow normally and are fertile. They display a sparse hair coat, a hyperplastic pilosebaceous system and their hair lipid content is disturbed with exceptionally high levels of eicosenoic acid (20:1). In the triglyceride fraction, fatty acids longer than 20 carbon atoms are almost undetectable. As a result, mice exhibited a severe defect in water repulsion and increased trans-epidermal water loss. When exposed to cold stress, mutants exhibit a significantly reduced VLCFA elongation activity in brown adipose tissue, but only during the initial phase. Cold-acclimated mutants are equally efficient as normal mice at elongating fatty acids. Mutant mice are lean and resistant to diet-induced weight gain, they show normal food intake but increased metabolic rate, and show reduced hepatic lipogenesis and triglycerides synthesis.</text>
</comment>
<comment type="similarity">
    <text evidence="2">Belongs to the ELO family. ELOVL3 subfamily.</text>
</comment>
<keyword id="KW-0256">Endoplasmic reticulum</keyword>
<keyword id="KW-0275">Fatty acid biosynthesis</keyword>
<keyword id="KW-0276">Fatty acid metabolism</keyword>
<keyword id="KW-0325">Glycoprotein</keyword>
<keyword id="KW-0444">Lipid biosynthesis</keyword>
<keyword id="KW-0443">Lipid metabolism</keyword>
<keyword id="KW-0472">Membrane</keyword>
<keyword id="KW-1185">Reference proteome</keyword>
<keyword id="KW-0808">Transferase</keyword>
<keyword id="KW-0812">Transmembrane</keyword>
<keyword id="KW-1133">Transmembrane helix</keyword>
<feature type="chain" id="PRO_0000207541" description="Very long chain fatty acid elongase 3">
    <location>
        <begin position="1"/>
        <end position="271"/>
    </location>
</feature>
<feature type="transmembrane region" description="Helical" evidence="2">
    <location>
        <begin position="30"/>
        <end position="50"/>
    </location>
</feature>
<feature type="transmembrane region" description="Helical" evidence="2">
    <location>
        <begin position="67"/>
        <end position="87"/>
    </location>
</feature>
<feature type="transmembrane region" description="Helical" evidence="2">
    <location>
        <begin position="116"/>
        <end position="136"/>
    </location>
</feature>
<feature type="transmembrane region" description="Helical" evidence="2">
    <location>
        <begin position="141"/>
        <end position="161"/>
    </location>
</feature>
<feature type="transmembrane region" description="Helical" evidence="2">
    <location>
        <begin position="165"/>
        <end position="187"/>
    </location>
</feature>
<feature type="transmembrane region" description="Helical" evidence="2">
    <location>
        <begin position="199"/>
        <end position="219"/>
    </location>
</feature>
<feature type="transmembrane region" description="Helical" evidence="2">
    <location>
        <begin position="236"/>
        <end position="256"/>
    </location>
</feature>
<feature type="glycosylation site" description="N-linked (GlcNAc...) asparagine" evidence="2 3 8">
    <location>
        <position position="6"/>
    </location>
</feature>
<name>ELOV3_MOUSE</name>
<sequence>MDTSMNFSRGLKMDLMQPYDFETFQDLRPFLEEYWVSSFLIVVVYLLLIVVGQTYMRTRKSFSLQRPLILWSFFLAIFSILGTLRMWKFMATVMFTVGLKQTVCFAIYTDDAVVRFWSFLFLLSKVVELGDTAFIILRKRPLIFVHWYHHSTVLLFTSFGYKNKVPSGGWFMTMNFGVHSVMYTYYTMKAAKLKHPNLLPMVITSLQILQMVLGTIFGILNYIWRQEKGCHTTTEHFFWSFMLYGTYFILFAHFFHRAYLRPKGKVASKSQ</sequence>
<evidence type="ECO:0000250" key="1">
    <source>
        <dbReference type="UniProtKB" id="Q9HB03"/>
    </source>
</evidence>
<evidence type="ECO:0000255" key="2">
    <source>
        <dbReference type="HAMAP-Rule" id="MF_03203"/>
    </source>
</evidence>
<evidence type="ECO:0000269" key="3">
    <source>
    </source>
</evidence>
<evidence type="ECO:0000269" key="4">
    <source>
    </source>
</evidence>
<evidence type="ECO:0000269" key="5">
    <source>
    </source>
</evidence>
<evidence type="ECO:0000269" key="6">
    <source>
    </source>
</evidence>
<evidence type="ECO:0000269" key="7">
    <source>
    </source>
</evidence>
<evidence type="ECO:0000269" key="8">
    <source>
    </source>
</evidence>
<accession>O35949</accession>
<protein>
    <recommendedName>
        <fullName evidence="2">Very long chain fatty acid elongase 3</fullName>
        <ecNumber evidence="1 2">2.3.1.199</ecNumber>
    </recommendedName>
    <alternativeName>
        <fullName evidence="2">3-keto acyl-CoA synthase Elovl3</fullName>
    </alternativeName>
    <alternativeName>
        <fullName>CIN-2</fullName>
    </alternativeName>
    <alternativeName>
        <fullName>Cold-inducible glycoprotein of 30 kDa</fullName>
    </alternativeName>
    <alternativeName>
        <fullName evidence="2">ELOVL fatty acid elongase 3</fullName>
        <shortName evidence="2">ELOVL FA elongase 3</shortName>
    </alternativeName>
    <alternativeName>
        <fullName evidence="2">Elongation of very long chain fatty acids protein 3</fullName>
    </alternativeName>
    <alternativeName>
        <fullName evidence="2">Very long chain 3-ketoacyl-CoA synthase 3</fullName>
    </alternativeName>
    <alternativeName>
        <fullName evidence="2">Very long chain 3-oxoacyl-CoA synthase 3</fullName>
    </alternativeName>
</protein>
<proteinExistence type="evidence at protein level"/>
<gene>
    <name evidence="2" type="primary">Elovl3</name>
    <name type="synonym">Cig30</name>
</gene>
<dbReference type="EC" id="2.3.1.199" evidence="1 2"/>
<dbReference type="EMBL" id="U97107">
    <property type="protein sequence ID" value="AAC06127.1"/>
    <property type="molecule type" value="mRNA"/>
</dbReference>
<dbReference type="EMBL" id="AF054504">
    <property type="protein sequence ID" value="AAD51088.1"/>
    <property type="molecule type" value="Genomic_DNA"/>
</dbReference>
<dbReference type="EMBL" id="BC016468">
    <property type="protein sequence ID" value="AAH16468.1"/>
    <property type="molecule type" value="mRNA"/>
</dbReference>
<dbReference type="CCDS" id="CCDS29871.1"/>
<dbReference type="RefSeq" id="NP_031729.1">
    <property type="nucleotide sequence ID" value="NM_007703.2"/>
</dbReference>
<dbReference type="SMR" id="O35949"/>
<dbReference type="FunCoup" id="O35949">
    <property type="interactions" value="123"/>
</dbReference>
<dbReference type="STRING" id="10090.ENSMUSP00000157465"/>
<dbReference type="BindingDB" id="O35949"/>
<dbReference type="ChEMBL" id="CHEMBL5775"/>
<dbReference type="GlyCosmos" id="O35949">
    <property type="glycosylation" value="1 site, No reported glycans"/>
</dbReference>
<dbReference type="GlyGen" id="O35949">
    <property type="glycosylation" value="1 site, 1 N-linked glycan (1 site)"/>
</dbReference>
<dbReference type="iPTMnet" id="O35949"/>
<dbReference type="PhosphoSitePlus" id="O35949"/>
<dbReference type="jPOST" id="O35949"/>
<dbReference type="PaxDb" id="10090-ENSMUSP00000036357"/>
<dbReference type="ProteomicsDB" id="277787"/>
<dbReference type="Antibodypedia" id="31401">
    <property type="antibodies" value="174 antibodies from 24 providers"/>
</dbReference>
<dbReference type="DNASU" id="12686"/>
<dbReference type="Ensembl" id="ENSMUST00000237098.2">
    <property type="protein sequence ID" value="ENSMUSP00000157465.2"/>
    <property type="gene ID" value="ENSMUSG00000038754.6"/>
</dbReference>
<dbReference type="GeneID" id="12686"/>
<dbReference type="KEGG" id="mmu:12686"/>
<dbReference type="UCSC" id="uc008hsk.1">
    <property type="organism name" value="mouse"/>
</dbReference>
<dbReference type="AGR" id="MGI:1195976"/>
<dbReference type="CTD" id="83401"/>
<dbReference type="MGI" id="MGI:1195976">
    <property type="gene designation" value="Elovl3"/>
</dbReference>
<dbReference type="VEuPathDB" id="HostDB:ENSMUSG00000038754"/>
<dbReference type="eggNOG" id="KOG3072">
    <property type="taxonomic scope" value="Eukaryota"/>
</dbReference>
<dbReference type="GeneTree" id="ENSGT01050000244965"/>
<dbReference type="HOGENOM" id="CLU_048483_1_1_1"/>
<dbReference type="InParanoid" id="O35949"/>
<dbReference type="OMA" id="FGVHAIM"/>
<dbReference type="OrthoDB" id="10259681at2759"/>
<dbReference type="PhylomeDB" id="O35949"/>
<dbReference type="TreeFam" id="TF106467"/>
<dbReference type="Reactome" id="R-MMU-2046105">
    <property type="pathway name" value="Linoleic acid (LA) metabolism"/>
</dbReference>
<dbReference type="Reactome" id="R-MMU-2046106">
    <property type="pathway name" value="alpha-linolenic acid (ALA) metabolism"/>
</dbReference>
<dbReference type="Reactome" id="R-MMU-75876">
    <property type="pathway name" value="Synthesis of very long-chain fatty acyl-CoAs"/>
</dbReference>
<dbReference type="UniPathway" id="UPA00658"/>
<dbReference type="BioGRID-ORCS" id="12686">
    <property type="hits" value="2 hits in 77 CRISPR screens"/>
</dbReference>
<dbReference type="PRO" id="PR:O35949"/>
<dbReference type="Proteomes" id="UP000000589">
    <property type="component" value="Chromosome 19"/>
</dbReference>
<dbReference type="RNAct" id="O35949">
    <property type="molecule type" value="protein"/>
</dbReference>
<dbReference type="Bgee" id="ENSMUSG00000038754">
    <property type="expression patterns" value="Expressed in lip and 57 other cell types or tissues"/>
</dbReference>
<dbReference type="ExpressionAtlas" id="O35949">
    <property type="expression patterns" value="baseline and differential"/>
</dbReference>
<dbReference type="GO" id="GO:0005783">
    <property type="term" value="C:endoplasmic reticulum"/>
    <property type="evidence" value="ECO:0000250"/>
    <property type="project" value="UniProtKB"/>
</dbReference>
<dbReference type="GO" id="GO:0005789">
    <property type="term" value="C:endoplasmic reticulum membrane"/>
    <property type="evidence" value="ECO:0000304"/>
    <property type="project" value="Reactome"/>
</dbReference>
<dbReference type="GO" id="GO:0009922">
    <property type="term" value="F:fatty acid elongase activity"/>
    <property type="evidence" value="ECO:0007669"/>
    <property type="project" value="UniProtKB-UniRule"/>
</dbReference>
<dbReference type="GO" id="GO:0034625">
    <property type="term" value="P:fatty acid elongation, monounsaturated fatty acid"/>
    <property type="evidence" value="ECO:0000315"/>
    <property type="project" value="UniProtKB"/>
</dbReference>
<dbReference type="GO" id="GO:0034626">
    <property type="term" value="P:fatty acid elongation, polyunsaturated fatty acid"/>
    <property type="evidence" value="ECO:0007669"/>
    <property type="project" value="UniProtKB-UniRule"/>
</dbReference>
<dbReference type="GO" id="GO:0019367">
    <property type="term" value="P:fatty acid elongation, saturated fatty acid"/>
    <property type="evidence" value="ECO:0000315"/>
    <property type="project" value="UniProtKB"/>
</dbReference>
<dbReference type="GO" id="GO:0035338">
    <property type="term" value="P:long-chain fatty-acyl-CoA biosynthetic process"/>
    <property type="evidence" value="ECO:0007669"/>
    <property type="project" value="UniProtKB-UniRule"/>
</dbReference>
<dbReference type="GO" id="GO:0120162">
    <property type="term" value="P:positive regulation of cold-induced thermogenesis"/>
    <property type="evidence" value="ECO:0000315"/>
    <property type="project" value="YuBioLab"/>
</dbReference>
<dbReference type="GO" id="GO:0006636">
    <property type="term" value="P:unsaturated fatty acid biosynthetic process"/>
    <property type="evidence" value="ECO:0007669"/>
    <property type="project" value="UniProtKB-UniRule"/>
</dbReference>
<dbReference type="GO" id="GO:0042761">
    <property type="term" value="P:very long-chain fatty acid biosynthetic process"/>
    <property type="evidence" value="ECO:0000315"/>
    <property type="project" value="UniProtKB"/>
</dbReference>
<dbReference type="HAMAP" id="MF_03203">
    <property type="entry name" value="VLCF_elongase_3"/>
    <property type="match status" value="1"/>
</dbReference>
<dbReference type="InterPro" id="IPR030457">
    <property type="entry name" value="ELO_CS"/>
</dbReference>
<dbReference type="InterPro" id="IPR002076">
    <property type="entry name" value="ELO_fam"/>
</dbReference>
<dbReference type="InterPro" id="IPR033679">
    <property type="entry name" value="ELOVL3"/>
</dbReference>
<dbReference type="PANTHER" id="PTHR11157:SF68">
    <property type="entry name" value="ELONGATION OF VERY LONG CHAIN FATTY ACIDS PROTEIN 3"/>
    <property type="match status" value="1"/>
</dbReference>
<dbReference type="PANTHER" id="PTHR11157">
    <property type="entry name" value="FATTY ACID ACYL TRANSFERASE-RELATED"/>
    <property type="match status" value="1"/>
</dbReference>
<dbReference type="Pfam" id="PF01151">
    <property type="entry name" value="ELO"/>
    <property type="match status" value="1"/>
</dbReference>
<dbReference type="PROSITE" id="PS01188">
    <property type="entry name" value="ELO"/>
    <property type="match status" value="1"/>
</dbReference>
<organism>
    <name type="scientific">Mus musculus</name>
    <name type="common">Mouse</name>
    <dbReference type="NCBI Taxonomy" id="10090"/>
    <lineage>
        <taxon>Eukaryota</taxon>
        <taxon>Metazoa</taxon>
        <taxon>Chordata</taxon>
        <taxon>Craniata</taxon>
        <taxon>Vertebrata</taxon>
        <taxon>Euteleostomi</taxon>
        <taxon>Mammalia</taxon>
        <taxon>Eutheria</taxon>
        <taxon>Euarchontoglires</taxon>
        <taxon>Glires</taxon>
        <taxon>Rodentia</taxon>
        <taxon>Myomorpha</taxon>
        <taxon>Muroidea</taxon>
        <taxon>Muridae</taxon>
        <taxon>Murinae</taxon>
        <taxon>Mus</taxon>
        <taxon>Mus</taxon>
    </lineage>
</organism>
<reference key="1">
    <citation type="journal article" date="1997" name="J. Biol. Chem.">
        <title>Cig30, a mouse member of a novel membrane protein gene family, is involved in the recruitment of brown adipose tissue.</title>
        <authorList>
            <person name="Tvrdik P."/>
            <person name="Asadi A."/>
            <person name="Kozak L.P."/>
            <person name="Nedergaard J."/>
            <person name="Cannon B."/>
            <person name="Jacobsson A."/>
        </authorList>
    </citation>
    <scope>NUCLEOTIDE SEQUENCE [MRNA]</scope>
    <scope>GLYCOSYLATION AT ASN-6</scope>
    <scope>TISSUE SPECIFICITY</scope>
    <source>
        <strain>C57BL/6J</strain>
        <tissue>Brown adipose tissue</tissue>
    </source>
</reference>
<reference key="2">
    <citation type="journal article" date="1999" name="J. Biol. Chem.">
        <title>Cig30 and Pitx3 genes are arranged in a partially overlapping tail-to-tail array resulting in complementary transcripts.</title>
        <authorList>
            <person name="Tvrdik P."/>
            <person name="Asadi A."/>
            <person name="Kozak L.P."/>
            <person name="Nuglozeh E."/>
            <person name="Parente F."/>
            <person name="Nedergaard J."/>
            <person name="Jacobsson A."/>
        </authorList>
    </citation>
    <scope>NUCLEOTIDE SEQUENCE [GENOMIC DNA]</scope>
    <source>
        <strain>129/SvJ</strain>
    </source>
</reference>
<reference key="3">
    <citation type="journal article" date="2004" name="Genome Res.">
        <title>The status, quality, and expansion of the NIH full-length cDNA project: the Mammalian Gene Collection (MGC).</title>
        <authorList>
            <consortium name="The MGC Project Team"/>
        </authorList>
    </citation>
    <scope>NUCLEOTIDE SEQUENCE [LARGE SCALE MRNA]</scope>
    <source>
        <tissue>Liver</tissue>
    </source>
</reference>
<reference key="4">
    <citation type="journal article" date="1999" name="Eur. J. Biochem.">
        <title>N-tail translocation in a eukaryotic polytopic membrane protein: synergy between neighboring transmembrane segments.</title>
        <authorList>
            <person name="Monne M."/>
            <person name="Gafvelin G."/>
            <person name="Nilsson R."/>
            <person name="von Heijne G."/>
        </authorList>
    </citation>
    <scope>GLYCOSYLATION AT ASN-6</scope>
    <scope>SUBCELLULAR LOCATION</scope>
</reference>
<reference key="5">
    <citation type="journal article" date="2000" name="J. Cell Biol.">
        <title>Role of a new mammalian gene family in the biosynthesis of very long chain fatty acids and sphingolipids.</title>
        <authorList>
            <person name="Tvrdik P."/>
            <person name="Westerberg R."/>
            <person name="Silve S."/>
            <person name="Asadi A."/>
            <person name="Jakobsson A."/>
            <person name="Cannon B."/>
            <person name="Loison G."/>
            <person name="Jacobsson A."/>
        </authorList>
    </citation>
    <scope>FUNCTION</scope>
    <source>
        <strain>BALB/cJ</strain>
        <tissue>Liver</tissue>
    </source>
</reference>
<reference key="6">
    <citation type="journal article" date="2004" name="J. Biol. Chem.">
        <title>Role for ELOVL3 and fatty acid chain length in development of hair and skin function.</title>
        <authorList>
            <person name="Westerberg R."/>
            <person name="Tvrdik P."/>
            <person name="Unden A.B."/>
            <person name="Mansson J.E."/>
            <person name="Norlen L."/>
            <person name="Jakobsson A."/>
            <person name="Holleran W.H."/>
            <person name="Elias P.M."/>
            <person name="Asadi A."/>
            <person name="Flodby P."/>
            <person name="Toftgard R."/>
            <person name="Capecchi M.R."/>
            <person name="Jacobsson A."/>
        </authorList>
    </citation>
    <scope>FUNCTION</scope>
    <scope>DISRUPTION PHENOTYPE</scope>
    <scope>TISSUE SPECIFICITY</scope>
</reference>
<reference key="7">
    <citation type="journal article" date="2006" name="J. Biol. Chem.">
        <title>ELOVL3 is an important component for early onset of lipid recruitment in brown adipose tissue.</title>
        <authorList>
            <person name="Westerberg R."/>
            <person name="Mansson J.E."/>
            <person name="Golozoubova V."/>
            <person name="Shabalina I.G."/>
            <person name="Backlund E.C."/>
            <person name="Tvrdik P."/>
            <person name="Retterstol K."/>
            <person name="Capecchi M.R."/>
            <person name="Jacobsson A."/>
        </authorList>
    </citation>
    <scope>FUNCTION</scope>
    <scope>DISRUPTION PHENOTYPE</scope>
</reference>
<reference key="8">
    <citation type="journal article" date="2010" name="FASEB J.">
        <title>Ablation of the very-long-chain fatty acid elongase ELOVL3 in mice leads to constrained lipid storage and resistance to diet-induced obesity.</title>
        <authorList>
            <person name="Zadravec D."/>
            <person name="Brolinson A."/>
            <person name="Fisher R.M."/>
            <person name="Carneheim C."/>
            <person name="Csikasz R.I."/>
            <person name="Bertrand-Michel J."/>
            <person name="Boren J."/>
            <person name="Guillou H."/>
            <person name="Rudling M."/>
            <person name="Jacobsso A."/>
        </authorList>
    </citation>
    <scope>FUNCTION</scope>
    <scope>DISRUPTION PHENOTYPE</scope>
</reference>